<reference key="1">
    <citation type="journal article" date="1988" name="Genomics">
        <title>Carcinoembryonic antigen family: characterization of cDNAs coding for NCA and CEA and suggestion of nonrandom sequence variation in their conserved loop-domains.</title>
        <authorList>
            <person name="Barnett T."/>
            <person name="Goebel S.J."/>
            <person name="Nothdurft M.A."/>
            <person name="Elting J.J."/>
        </authorList>
    </citation>
    <scope>NUCLEOTIDE SEQUENCE [MRNA]</scope>
    <scope>VARIANT GLY-239</scope>
</reference>
<reference key="2">
    <citation type="journal article" date="1988" name="Biochem. Biophys. Res. Commun.">
        <title>Primary structure of nonspecific crossreacting antigen (NCA), a member of carcinoembryonic antigen (CEA) gene family, deduced from cDNA sequence.</title>
        <authorList>
            <person name="Tawaragi Y."/>
            <person name="Oikawa S."/>
            <person name="Matsuoka Y."/>
            <person name="Kosaki G."/>
            <person name="Nakazato H."/>
        </authorList>
    </citation>
    <scope>NUCLEOTIDE SEQUENCE [MRNA]</scope>
    <source>
        <tissue>Lung carcinoma</tissue>
    </source>
</reference>
<reference key="3">
    <citation type="journal article" date="1988" name="J. Biol. Chem.">
        <title>Characterization of a cDNA clone for the nonspecific cross-reacting antigen (NCA) and a comparison of NCA and carcinoembryonic antigen.</title>
        <authorList>
            <person name="Neumaier M."/>
            <person name="Zimmermann W."/>
            <person name="Shively L."/>
            <person name="Hinoda Y."/>
            <person name="Riggs A.D."/>
            <person name="Shively J.E."/>
        </authorList>
    </citation>
    <scope>NUCLEOTIDE SEQUENCE [MRNA]</scope>
    <scope>VARIANT GLY-239</scope>
</reference>
<reference key="4">
    <citation type="submission" date="2003-08" db="EMBL/GenBank/DDBJ databases">
        <title>Cloning of human full-length CDSs in BD Creator(TM) system donor vector.</title>
        <authorList>
            <person name="Kalnine N."/>
            <person name="Chen X."/>
            <person name="Rolfs A."/>
            <person name="Halleck A."/>
            <person name="Hines L."/>
            <person name="Eisenstein S."/>
            <person name="Koundinya M."/>
            <person name="Raphael J."/>
            <person name="Moreira D."/>
            <person name="Kelley T."/>
            <person name="LaBaer J."/>
            <person name="Lin Y."/>
            <person name="Phelan M."/>
            <person name="Farmer A."/>
        </authorList>
    </citation>
    <scope>NUCLEOTIDE SEQUENCE [LARGE SCALE MRNA]</scope>
</reference>
<reference key="5">
    <citation type="journal article" date="2004" name="Nat. Genet.">
        <title>Complete sequencing and characterization of 21,243 full-length human cDNAs.</title>
        <authorList>
            <person name="Ota T."/>
            <person name="Suzuki Y."/>
            <person name="Nishikawa T."/>
            <person name="Otsuki T."/>
            <person name="Sugiyama T."/>
            <person name="Irie R."/>
            <person name="Wakamatsu A."/>
            <person name="Hayashi K."/>
            <person name="Sato H."/>
            <person name="Nagai K."/>
            <person name="Kimura K."/>
            <person name="Makita H."/>
            <person name="Sekine M."/>
            <person name="Obayashi M."/>
            <person name="Nishi T."/>
            <person name="Shibahara T."/>
            <person name="Tanaka T."/>
            <person name="Ishii S."/>
            <person name="Yamamoto J."/>
            <person name="Saito K."/>
            <person name="Kawai Y."/>
            <person name="Isono Y."/>
            <person name="Nakamura Y."/>
            <person name="Nagahari K."/>
            <person name="Murakami K."/>
            <person name="Yasuda T."/>
            <person name="Iwayanagi T."/>
            <person name="Wagatsuma M."/>
            <person name="Shiratori A."/>
            <person name="Sudo H."/>
            <person name="Hosoiri T."/>
            <person name="Kaku Y."/>
            <person name="Kodaira H."/>
            <person name="Kondo H."/>
            <person name="Sugawara M."/>
            <person name="Takahashi M."/>
            <person name="Kanda K."/>
            <person name="Yokoi T."/>
            <person name="Furuya T."/>
            <person name="Kikkawa E."/>
            <person name="Omura Y."/>
            <person name="Abe K."/>
            <person name="Kamihara K."/>
            <person name="Katsuta N."/>
            <person name="Sato K."/>
            <person name="Tanikawa M."/>
            <person name="Yamazaki M."/>
            <person name="Ninomiya K."/>
            <person name="Ishibashi T."/>
            <person name="Yamashita H."/>
            <person name="Murakawa K."/>
            <person name="Fujimori K."/>
            <person name="Tanai H."/>
            <person name="Kimata M."/>
            <person name="Watanabe M."/>
            <person name="Hiraoka S."/>
            <person name="Chiba Y."/>
            <person name="Ishida S."/>
            <person name="Ono Y."/>
            <person name="Takiguchi S."/>
            <person name="Watanabe S."/>
            <person name="Yosida M."/>
            <person name="Hotuta T."/>
            <person name="Kusano J."/>
            <person name="Kanehori K."/>
            <person name="Takahashi-Fujii A."/>
            <person name="Hara H."/>
            <person name="Tanase T.-O."/>
            <person name="Nomura Y."/>
            <person name="Togiya S."/>
            <person name="Komai F."/>
            <person name="Hara R."/>
            <person name="Takeuchi K."/>
            <person name="Arita M."/>
            <person name="Imose N."/>
            <person name="Musashino K."/>
            <person name="Yuuki H."/>
            <person name="Oshima A."/>
            <person name="Sasaki N."/>
            <person name="Aotsuka S."/>
            <person name="Yoshikawa Y."/>
            <person name="Matsunawa H."/>
            <person name="Ichihara T."/>
            <person name="Shiohata N."/>
            <person name="Sano S."/>
            <person name="Moriya S."/>
            <person name="Momiyama H."/>
            <person name="Satoh N."/>
            <person name="Takami S."/>
            <person name="Terashima Y."/>
            <person name="Suzuki O."/>
            <person name="Nakagawa S."/>
            <person name="Senoh A."/>
            <person name="Mizoguchi H."/>
            <person name="Goto Y."/>
            <person name="Shimizu F."/>
            <person name="Wakebe H."/>
            <person name="Hishigaki H."/>
            <person name="Watanabe T."/>
            <person name="Sugiyama A."/>
            <person name="Takemoto M."/>
            <person name="Kawakami B."/>
            <person name="Yamazaki M."/>
            <person name="Watanabe K."/>
            <person name="Kumagai A."/>
            <person name="Itakura S."/>
            <person name="Fukuzumi Y."/>
            <person name="Fujimori Y."/>
            <person name="Komiyama M."/>
            <person name="Tashiro H."/>
            <person name="Tanigami A."/>
            <person name="Fujiwara T."/>
            <person name="Ono T."/>
            <person name="Yamada K."/>
            <person name="Fujii Y."/>
            <person name="Ozaki K."/>
            <person name="Hirao M."/>
            <person name="Ohmori Y."/>
            <person name="Kawabata A."/>
            <person name="Hikiji T."/>
            <person name="Kobatake N."/>
            <person name="Inagaki H."/>
            <person name="Ikema Y."/>
            <person name="Okamoto S."/>
            <person name="Okitani R."/>
            <person name="Kawakami T."/>
            <person name="Noguchi S."/>
            <person name="Itoh T."/>
            <person name="Shigeta K."/>
            <person name="Senba T."/>
            <person name="Matsumura K."/>
            <person name="Nakajima Y."/>
            <person name="Mizuno T."/>
            <person name="Morinaga M."/>
            <person name="Sasaki M."/>
            <person name="Togashi T."/>
            <person name="Oyama M."/>
            <person name="Hata H."/>
            <person name="Watanabe M."/>
            <person name="Komatsu T."/>
            <person name="Mizushima-Sugano J."/>
            <person name="Satoh T."/>
            <person name="Shirai Y."/>
            <person name="Takahashi Y."/>
            <person name="Nakagawa K."/>
            <person name="Okumura K."/>
            <person name="Nagase T."/>
            <person name="Nomura N."/>
            <person name="Kikuchi H."/>
            <person name="Masuho Y."/>
            <person name="Yamashita R."/>
            <person name="Nakai K."/>
            <person name="Yada T."/>
            <person name="Nakamura Y."/>
            <person name="Ohara O."/>
            <person name="Isogai T."/>
            <person name="Sugano S."/>
        </authorList>
    </citation>
    <scope>NUCLEOTIDE SEQUENCE [LARGE SCALE MRNA]</scope>
    <source>
        <tissue>Tongue</tissue>
    </source>
</reference>
<reference key="6">
    <citation type="journal article" date="2004" name="Nature">
        <title>The DNA sequence and biology of human chromosome 19.</title>
        <authorList>
            <person name="Grimwood J."/>
            <person name="Gordon L.A."/>
            <person name="Olsen A.S."/>
            <person name="Terry A."/>
            <person name="Schmutz J."/>
            <person name="Lamerdin J.E."/>
            <person name="Hellsten U."/>
            <person name="Goodstein D."/>
            <person name="Couronne O."/>
            <person name="Tran-Gyamfi M."/>
            <person name="Aerts A."/>
            <person name="Altherr M."/>
            <person name="Ashworth L."/>
            <person name="Bajorek E."/>
            <person name="Black S."/>
            <person name="Branscomb E."/>
            <person name="Caenepeel S."/>
            <person name="Carrano A.V."/>
            <person name="Caoile C."/>
            <person name="Chan Y.M."/>
            <person name="Christensen M."/>
            <person name="Cleland C.A."/>
            <person name="Copeland A."/>
            <person name="Dalin E."/>
            <person name="Dehal P."/>
            <person name="Denys M."/>
            <person name="Detter J.C."/>
            <person name="Escobar J."/>
            <person name="Flowers D."/>
            <person name="Fotopulos D."/>
            <person name="Garcia C."/>
            <person name="Georgescu A.M."/>
            <person name="Glavina T."/>
            <person name="Gomez M."/>
            <person name="Gonzales E."/>
            <person name="Groza M."/>
            <person name="Hammon N."/>
            <person name="Hawkins T."/>
            <person name="Haydu L."/>
            <person name="Ho I."/>
            <person name="Huang W."/>
            <person name="Israni S."/>
            <person name="Jett J."/>
            <person name="Kadner K."/>
            <person name="Kimball H."/>
            <person name="Kobayashi A."/>
            <person name="Larionov V."/>
            <person name="Leem S.-H."/>
            <person name="Lopez F."/>
            <person name="Lou Y."/>
            <person name="Lowry S."/>
            <person name="Malfatti S."/>
            <person name="Martinez D."/>
            <person name="McCready P.M."/>
            <person name="Medina C."/>
            <person name="Morgan J."/>
            <person name="Nelson K."/>
            <person name="Nolan M."/>
            <person name="Ovcharenko I."/>
            <person name="Pitluck S."/>
            <person name="Pollard M."/>
            <person name="Popkie A.P."/>
            <person name="Predki P."/>
            <person name="Quan G."/>
            <person name="Ramirez L."/>
            <person name="Rash S."/>
            <person name="Retterer J."/>
            <person name="Rodriguez A."/>
            <person name="Rogers S."/>
            <person name="Salamov A."/>
            <person name="Salazar A."/>
            <person name="She X."/>
            <person name="Smith D."/>
            <person name="Slezak T."/>
            <person name="Solovyev V."/>
            <person name="Thayer N."/>
            <person name="Tice H."/>
            <person name="Tsai M."/>
            <person name="Ustaszewska A."/>
            <person name="Vo N."/>
            <person name="Wagner M."/>
            <person name="Wheeler J."/>
            <person name="Wu K."/>
            <person name="Xie G."/>
            <person name="Yang J."/>
            <person name="Dubchak I."/>
            <person name="Furey T.S."/>
            <person name="DeJong P."/>
            <person name="Dickson M."/>
            <person name="Gordon D."/>
            <person name="Eichler E.E."/>
            <person name="Pennacchio L.A."/>
            <person name="Richardson P."/>
            <person name="Stubbs L."/>
            <person name="Rokhsar D.S."/>
            <person name="Myers R.M."/>
            <person name="Rubin E.M."/>
            <person name="Lucas S.M."/>
        </authorList>
    </citation>
    <scope>NUCLEOTIDE SEQUENCE [LARGE SCALE GENOMIC DNA]</scope>
</reference>
<reference key="7">
    <citation type="submission" date="2005-07" db="EMBL/GenBank/DDBJ databases">
        <authorList>
            <person name="Mural R.J."/>
            <person name="Istrail S."/>
            <person name="Sutton G.G."/>
            <person name="Florea L."/>
            <person name="Halpern A.L."/>
            <person name="Mobarry C.M."/>
            <person name="Lippert R."/>
            <person name="Walenz B."/>
            <person name="Shatkay H."/>
            <person name="Dew I."/>
            <person name="Miller J.R."/>
            <person name="Flanigan M.J."/>
            <person name="Edwards N.J."/>
            <person name="Bolanos R."/>
            <person name="Fasulo D."/>
            <person name="Halldorsson B.V."/>
            <person name="Hannenhalli S."/>
            <person name="Turner R."/>
            <person name="Yooseph S."/>
            <person name="Lu F."/>
            <person name="Nusskern D.R."/>
            <person name="Shue B.C."/>
            <person name="Zheng X.H."/>
            <person name="Zhong F."/>
            <person name="Delcher A.L."/>
            <person name="Huson D.H."/>
            <person name="Kravitz S.A."/>
            <person name="Mouchard L."/>
            <person name="Reinert K."/>
            <person name="Remington K.A."/>
            <person name="Clark A.G."/>
            <person name="Waterman M.S."/>
            <person name="Eichler E.E."/>
            <person name="Adams M.D."/>
            <person name="Hunkapiller M.W."/>
            <person name="Myers E.W."/>
            <person name="Venter J.C."/>
        </authorList>
    </citation>
    <scope>NUCLEOTIDE SEQUENCE [LARGE SCALE GENOMIC DNA]</scope>
</reference>
<reference key="8">
    <citation type="journal article" date="2004" name="Genome Res.">
        <title>The status, quality, and expansion of the NIH full-length cDNA project: the Mammalian Gene Collection (MGC).</title>
        <authorList>
            <consortium name="The MGC Project Team"/>
        </authorList>
    </citation>
    <scope>NUCLEOTIDE SEQUENCE [LARGE SCALE MRNA]</scope>
    <source>
        <tissue>Pancreas</tissue>
    </source>
</reference>
<reference key="9">
    <citation type="journal article" date="2004" name="Protein Sci.">
        <title>Signal peptide prediction based on analysis of experimentally verified cleavage sites.</title>
        <authorList>
            <person name="Zhang Z."/>
            <person name="Henzel W.J."/>
        </authorList>
    </citation>
    <scope>PROTEIN SEQUENCE OF 35-49</scope>
</reference>
<reference key="10">
    <citation type="journal article" date="1989" name="Biochem. Biophys. Res. Commun.">
        <title>Cell adhesion activity of non-specific cross-reacting antigen (NCA) and carcinoembryonic antigen (CEA) expressed on CHO cell surface: homophilic and heterophilic adhesion.</title>
        <authorList>
            <person name="Oikawa S."/>
            <person name="Inuzuka C."/>
            <person name="Kuroki M."/>
            <person name="Matsuoka Y."/>
            <person name="Kosaki G."/>
            <person name="Nakazato H."/>
        </authorList>
    </citation>
    <scope>FUNCTION</scope>
    <scope>SUBCELLULAR LOCATION</scope>
</reference>
<reference key="11">
    <citation type="journal article" date="1990" name="Cancer Res.">
        <title>Expression of complementary DNA and genomic clones for carcinoembryonic antigen and nonspecific cross-reacting antigen in Chinese hamster ovary and mouse fibroblast cells and characterization of the membrane-expressed products.</title>
        <authorList>
            <person name="Hefta L.J."/>
            <person name="Schrewe H."/>
            <person name="Thompson J.A."/>
            <person name="Oikawa S."/>
            <person name="Nakazato H."/>
            <person name="Shively J.E."/>
        </authorList>
    </citation>
    <scope>SUBCELLULAR LOCATION</scope>
    <scope>GPI-ANCHOR</scope>
</reference>
<reference key="12">
    <citation type="journal article" date="1991" name="J. Biol. Chem.">
        <title>A specific heterotypic cell adhesion activity between members of carcinoembryonic antigen family, W272 and NCA, is mediated by N-domains.</title>
        <authorList>
            <person name="Oikawa S."/>
            <person name="Inuzuka C."/>
            <person name="Kuroki M."/>
            <person name="Arakawa F."/>
            <person name="Matsuoka Y."/>
            <person name="Kosaki G."/>
            <person name="Nakazato H."/>
        </authorList>
    </citation>
    <scope>FUNCTION</scope>
    <scope>DOMAIN</scope>
</reference>
<reference key="13">
    <citation type="journal article" date="1992" name="J. Cell Biol.">
        <title>CD66 nonspecific cross-reacting antigens are involved in neutrophil adherence to cytokine-activated endothelial cells.</title>
        <authorList>
            <person name="Kuijpers T.W."/>
            <person name="Hoogerwerf M."/>
            <person name="van der Laan L.J."/>
            <person name="Nagel G."/>
            <person name="van der Schoot C.E."/>
            <person name="Grunert F."/>
            <person name="Roos D."/>
        </authorList>
    </citation>
    <scope>FUNCTION</scope>
    <scope>SUBCELLULAR LOCATION</scope>
    <scope>TISSUE SPECIFICITY</scope>
</reference>
<reference key="14">
    <citation type="journal article" date="1996" name="Protein Expr. Purif.">
        <title>Preparation and characterization of two human carcinoembryonic antigen family proteins of neutrophils, CD66b and c, in silkworm larvae.</title>
        <authorList>
            <person name="Yamanaka T."/>
            <person name="Kuroki M."/>
            <person name="Kinugasa T."/>
            <person name="Matsuo Y."/>
            <person name="Matsuoka Y."/>
        </authorList>
    </citation>
    <scope>FUNCTION</scope>
    <scope>SUBCELLULAR LOCATION</scope>
    <scope>DOMAIN</scope>
</reference>
<reference key="15">
    <citation type="journal article" date="1999" name="Tumor Biol.">
        <title>Four carcinoembryonic antigen subfamily members, CEA, NCA, BGP and CGM2, selectively expressed in the normal human colonic epithelium, are integral components of the fuzzy coat.</title>
        <authorList>
            <person name="Fraengsmyr L."/>
            <person name="Baranov V."/>
            <person name="Hammarstroem S."/>
        </authorList>
    </citation>
    <scope>SUBCELLULAR LOCATION</scope>
    <scope>TISSUE SPECIFICITY</scope>
</reference>
<reference key="16">
    <citation type="journal article" date="2000" name="Cancer Res.">
        <title>Human carcinoembryonic antigen functions as a general inhibitor of anoikis.</title>
        <authorList>
            <person name="Ordonez C."/>
            <person name="Screaton R.A."/>
            <person name="Ilantzis C."/>
            <person name="Stanners C.P."/>
        </authorList>
    </citation>
    <scope>FUNCTION</scope>
</reference>
<reference key="17">
    <citation type="journal article" date="2001" name="J. Leukoc. Biol.">
        <title>Identification and comparison of residues critical for cell-adhesion activities of two neutrophil CD66 antigens, CEACAM6 and CEACAM8.</title>
        <authorList>
            <person name="Kuroki M."/>
            <person name="Abe H."/>
            <person name="Imakiirei T."/>
            <person name="Liao S."/>
            <person name="Uchida H."/>
            <person name="Yamauchi Y."/>
            <person name="Oikawa S."/>
            <person name="Kuroki M."/>
        </authorList>
    </citation>
    <scope>FUNCTION</scope>
    <scope>DOMAIN</scope>
    <scope>MUTAGENESIS OF ALA-55; ASN-61; ARG-62; ILE-63; SER-66 AND LEU-78</scope>
</reference>
<reference key="18">
    <citation type="journal article" date="2004" name="Oncogene">
        <title>CEACAM6 gene silencing impairs anoikis resistance and in vivo metastatic ability of pancreatic adenocarcinoma cells.</title>
        <authorList>
            <person name="Duxbury M.S."/>
            <person name="Ito H."/>
            <person name="Zinner M.J."/>
            <person name="Ashley S.W."/>
            <person name="Whang E.E."/>
        </authorList>
    </citation>
    <scope>RETRACTED PAPER</scope>
</reference>
<reference key="19">
    <citation type="journal article" date="2023" name="Oncogene">
        <title>Retraction Note: CEACAM6 gene silencing impairs anoikis resistance and in vivo metastatic ability of pancreatic adenocarcinoma cells.</title>
        <authorList>
            <person name="Duxbury M.S."/>
            <person name="Ito H."/>
            <person name="Zinner M.J."/>
            <person name="Ashley S.W."/>
            <person name="Whang E.E."/>
        </authorList>
    </citation>
    <scope>RETRACTION NOTICE OF PUBMED:14724575</scope>
</reference>
<reference key="20">
    <citation type="journal article" date="2005" name="Cancer Res.">
        <title>Inhibition of adhesion, invasion, and metastasis by antibodies targeting CEACAM6 (NCA-90) and CEACAM5 (Carcinoembryonic Antigen).</title>
        <authorList>
            <person name="Blumenthal R.D."/>
            <person name="Hansen H.J."/>
            <person name="Goldenberg D.M."/>
        </authorList>
    </citation>
    <scope>FUNCTION</scope>
    <scope>SUBCELLULAR LOCATION</scope>
    <scope>TISSUE SPECIFICITY</scope>
</reference>
<reference key="21">
    <citation type="journal article" date="2006" name="J. Proteome Res.">
        <title>Identification of N-linked glycoproteins in human saliva by glycoprotein capture and mass spectrometry.</title>
        <authorList>
            <person name="Ramachandran P."/>
            <person name="Boontheung P."/>
            <person name="Xie Y."/>
            <person name="Sondej M."/>
            <person name="Wong D.T."/>
            <person name="Loo J.A."/>
        </authorList>
    </citation>
    <scope>GLYCOSYLATION [LARGE SCALE ANALYSIS] AT ASN-197</scope>
    <source>
        <tissue>Saliva</tissue>
    </source>
</reference>
<reference key="22">
    <citation type="journal article" date="2009" name="J. Proteome Res.">
        <title>Glycoproteomics analysis of human liver tissue by combination of multiple enzyme digestion and hydrazide chemistry.</title>
        <authorList>
            <person name="Chen R."/>
            <person name="Jiang X."/>
            <person name="Sun D."/>
            <person name="Han G."/>
            <person name="Wang F."/>
            <person name="Ye M."/>
            <person name="Wang L."/>
            <person name="Zou H."/>
        </authorList>
    </citation>
    <scope>GLYCOSYLATION [LARGE SCALE ANALYSIS] AT ASN-224</scope>
    <source>
        <tissue>Liver</tissue>
    </source>
</reference>
<reference evidence="26" key="23">
    <citation type="submission" date="2014-09" db="PDB data bank">
        <title>Human CEACAM6 N-domain.</title>
        <authorList>
            <person name="Prive G.G."/>
            <person name="Kirouac K.N."/>
        </authorList>
    </citation>
    <scope>X-RAY CRYSTALLOGRAPHY (2.71 ANGSTROMS) OF 34-141 OF HOMODIMER</scope>
</reference>
<reference evidence="27" key="24">
    <citation type="submission" date="2014-10" db="PDB data bank">
        <title>Human CEACAM6-CEACAM8 N-domain heterodimer complex.</title>
        <authorList>
            <person name="Kirouac K.N."/>
            <person name="Prive G.G."/>
        </authorList>
    </citation>
    <scope>X-RAY CRYSTALLOGRAPHY (2.52 ANGSTROMS) OF 34-141 IN COMPLEX WITH CEACAM8</scope>
</reference>
<reference evidence="28 29" key="25">
    <citation type="journal article" date="2015" name="Proc. Natl. Acad. Sci. U.S.A.">
        <title>Diverse oligomeric states of CEACAM IgV domains.</title>
        <authorList>
            <person name="Bonsor D.A."/>
            <person name="Gunther S."/>
            <person name="Beadenkopf R."/>
            <person name="Beckett D."/>
            <person name="Sundberg E.J."/>
        </authorList>
    </citation>
    <scope>X-RAY CRYSTALLOGRAPHY (1.83 ANGSTROMS) OF 34-141 OF HOMODIMER AND IN COMPLEX WITH CEACAM8</scope>
    <scope>SUBUNIT</scope>
    <scope>GLYCOSYLATION</scope>
    <scope>MUTAGENESIS OF ILE-38; LEU-53; GLN-123 AND LEU-129</scope>
</reference>
<reference key="26">
    <citation type="journal article" date="2008" name="Proteomics">
        <title>Large-scale phosphoproteome analysis of human liver tissue by enrichment and fractionation of phosphopeptides with strong anion exchange chromatography.</title>
        <authorList>
            <person name="Han G."/>
            <person name="Ye M."/>
            <person name="Zhou H."/>
            <person name="Jiang X."/>
            <person name="Feng S."/>
            <person name="Jiang X."/>
            <person name="Tian R."/>
            <person name="Wan D."/>
            <person name="Zou H."/>
            <person name="Gu J."/>
        </authorList>
    </citation>
    <scope>IDENTIFICATION BY MASS SPECTROMETRY [LARGE SCALE ANALYSIS]</scope>
    <source>
        <tissue>Liver</tissue>
    </source>
</reference>
<proteinExistence type="evidence at protein level"/>
<evidence type="ECO:0000250" key="1"/>
<evidence type="ECO:0000250" key="2">
    <source>
        <dbReference type="UniProtKB" id="P31997"/>
    </source>
</evidence>
<evidence type="ECO:0000255" key="3">
    <source>
        <dbReference type="PROSITE-ProRule" id="PRU00114"/>
    </source>
</evidence>
<evidence type="ECO:0000255" key="4">
    <source>
        <dbReference type="PROSITE-ProRule" id="PRU00498"/>
    </source>
</evidence>
<evidence type="ECO:0000269" key="5">
    <source>
    </source>
</evidence>
<evidence type="ECO:0000269" key="6">
    <source>
    </source>
</evidence>
<evidence type="ECO:0000269" key="7">
    <source>
    </source>
</evidence>
<evidence type="ECO:0000269" key="8">
    <source>
    </source>
</evidence>
<evidence type="ECO:0000269" key="9">
    <source>
    </source>
</evidence>
<evidence type="ECO:0000269" key="10">
    <source>
    </source>
</evidence>
<evidence type="ECO:0000269" key="11">
    <source>
    </source>
</evidence>
<evidence type="ECO:0000269" key="12">
    <source>
    </source>
</evidence>
<evidence type="ECO:0000269" key="13">
    <source>
    </source>
</evidence>
<evidence type="ECO:0000269" key="14">
    <source>
    </source>
</evidence>
<evidence type="ECO:0000269" key="15">
    <source>
    </source>
</evidence>
<evidence type="ECO:0000269" key="16">
    <source>
    </source>
</evidence>
<evidence type="ECO:0000269" key="17">
    <source>
    </source>
</evidence>
<evidence type="ECO:0000269" key="18">
    <source>
    </source>
</evidence>
<evidence type="ECO:0000269" key="19">
    <source>
    </source>
</evidence>
<evidence type="ECO:0000269" key="20">
    <source>
    </source>
</evidence>
<evidence type="ECO:0000269" key="21">
    <source>
    </source>
</evidence>
<evidence type="ECO:0000303" key="22">
    <source>
    </source>
</evidence>
<evidence type="ECO:0000305" key="23"/>
<evidence type="ECO:0000305" key="24">
    <source>
    </source>
</evidence>
<evidence type="ECO:0000312" key="25">
    <source>
        <dbReference type="HGNC" id="HGNC:1818"/>
    </source>
</evidence>
<evidence type="ECO:0007744" key="26">
    <source>
        <dbReference type="PDB" id="4WHC"/>
    </source>
</evidence>
<evidence type="ECO:0007744" key="27">
    <source>
        <dbReference type="PDB" id="4WTZ"/>
    </source>
</evidence>
<evidence type="ECO:0007744" key="28">
    <source>
        <dbReference type="PDB" id="4Y8A"/>
    </source>
</evidence>
<evidence type="ECO:0007744" key="29">
    <source>
        <dbReference type="PDB" id="4YIQ"/>
    </source>
</evidence>
<evidence type="ECO:0007829" key="30">
    <source>
        <dbReference type="PDB" id="4Y8A"/>
    </source>
</evidence>
<accession>P40199</accession>
<accession>Q13774</accession>
<accession>Q14920</accession>
<accession>Q53XP7</accession>
<protein>
    <recommendedName>
        <fullName evidence="23">Cell adhesion molecule CEACAM6</fullName>
    </recommendedName>
    <alternativeName>
        <fullName>Carcinoembryonic antigen-related cell adhesion molecule 6</fullName>
        <shortName evidence="25">CEA cell adhesion molecule 6</shortName>
    </alternativeName>
    <alternativeName>
        <fullName evidence="22">Non-specific crossreacting antigen</fullName>
    </alternativeName>
    <alternativeName>
        <fullName>Normal cross-reacting antigen</fullName>
    </alternativeName>
    <cdAntigenName>CD66c</cdAntigenName>
</protein>
<comment type="function">
    <text evidence="6 7 8 11 14 17 21">Cell surface glycoprotein that plays a role in cell adhesion and tumor progression (PubMed:10910050, PubMed:11590190, PubMed:1378450, PubMed:16204051, PubMed:2022629, PubMed:2803308, PubMed:8776764). Intercellular adhesion occurs in a calcium- and fibronectin-independent manner (PubMed:16204051, PubMed:2022629). Mediates homophilic and heterophilic cell adhesion with other carcinoembryonic antigen-related cell adhesion molecules, such as CEACAM5 and CEACAM8 (PubMed:11590190, PubMed:16204051, PubMed:2022629, PubMed:2803308, PubMed:8776764). Heterophilic interaction with CEACAM8 occurs in activated neutrophils (PubMed:8776764). Plays a role in neutrophil adhesion to cytokine-activated endothelial cells (PubMed:1378450). Plays a role in cell migration and cell adhesion to endothelial cells (PubMed:16204051).</text>
</comment>
<comment type="subunit">
    <text evidence="16">Homodimer; homodimerizes via its Ig-like V-type domain. Heterodimer with CEACAM8; heterodimerizes via its Ig-like V-type domain.</text>
</comment>
<comment type="interaction">
    <interactant intactId="EBI-4314501">
        <id>P40199</id>
    </interactant>
    <interactant intactId="EBI-19946665">
        <id>Q86U10</id>
        <label>ASPG</label>
    </interactant>
    <organismsDiffer>false</organismsDiffer>
    <experiments>3</experiments>
</comment>
<comment type="interaction">
    <interactant intactId="EBI-4314501">
        <id>P40199</id>
    </interactant>
    <interactant intactId="EBI-4314526">
        <id>Q16568</id>
        <label>CARTPT</label>
    </interactant>
    <organismsDiffer>false</organismsDiffer>
    <experiments>3</experiments>
</comment>
<comment type="interaction">
    <interactant intactId="EBI-4314501">
        <id>P40199</id>
    </interactant>
    <interactant intactId="EBI-4314481">
        <id>P13688</id>
        <label>CEACAM1</label>
    </interactant>
    <organismsDiffer>false</organismsDiffer>
    <experiments>2</experiments>
</comment>
<comment type="interaction">
    <interactant intactId="EBI-4314501">
        <id>P40199</id>
    </interactant>
    <interactant intactId="EBI-4314501">
        <id>P40199</id>
        <label>CEACAM6</label>
    </interactant>
    <organismsDiffer>false</organismsDiffer>
    <experiments>6</experiments>
</comment>
<comment type="interaction">
    <interactant intactId="EBI-4314501">
        <id>P40199</id>
    </interactant>
    <interactant intactId="EBI-4314540">
        <id>P31997</id>
        <label>CEACAM8</label>
    </interactant>
    <organismsDiffer>false</organismsDiffer>
    <experiments>5</experiments>
</comment>
<comment type="interaction">
    <interactant intactId="EBI-4314501">
        <id>P40199</id>
    </interactant>
    <interactant intactId="EBI-372594">
        <id>Q99828</id>
        <label>CIB1</label>
    </interactant>
    <organismsDiffer>false</organismsDiffer>
    <experiments>3</experiments>
</comment>
<comment type="interaction">
    <interactant intactId="EBI-4314501">
        <id>P40199</id>
    </interactant>
    <interactant intactId="EBI-711360">
        <id>P33240</id>
        <label>CSTF2</label>
    </interactant>
    <organismsDiffer>false</organismsDiffer>
    <experiments>3</experiments>
</comment>
<comment type="interaction">
    <interactant intactId="EBI-4314501">
        <id>P40199</id>
    </interactant>
    <interactant intactId="EBI-2813180">
        <id>Q86VI1</id>
        <label>EXOC3L1</label>
    </interactant>
    <organismsDiffer>false</organismsDiffer>
    <experiments>3</experiments>
</comment>
<comment type="interaction">
    <interactant intactId="EBI-4314501">
        <id>P40199</id>
    </interactant>
    <interactant intactId="EBI-1759806">
        <id>O75593</id>
        <label>FOXH1</label>
    </interactant>
    <organismsDiffer>false</organismsDiffer>
    <experiments>3</experiments>
</comment>
<comment type="interaction">
    <interactant intactId="EBI-4314501">
        <id>P40199</id>
    </interactant>
    <interactant intactId="EBI-10188645">
        <id>O75603</id>
        <label>GCM2</label>
    </interactant>
    <organismsDiffer>false</organismsDiffer>
    <experiments>3</experiments>
</comment>
<comment type="interaction">
    <interactant intactId="EBI-4314501">
        <id>P40199</id>
    </interactant>
    <interactant intactId="EBI-751540">
        <id>O95872</id>
        <label>GPANK1</label>
    </interactant>
    <organismsDiffer>false</organismsDiffer>
    <experiments>3</experiments>
</comment>
<comment type="interaction">
    <interactant intactId="EBI-4314501">
        <id>P40199</id>
    </interactant>
    <interactant intactId="EBI-740220">
        <id>O14964</id>
        <label>HGS</label>
    </interactant>
    <organismsDiffer>false</organismsDiffer>
    <experiments>3</experiments>
</comment>
<comment type="interaction">
    <interactant intactId="EBI-4314501">
        <id>P40199</id>
    </interactant>
    <interactant intactId="EBI-744820">
        <id>Q9UM19</id>
        <label>HPCAL4</label>
    </interactant>
    <organismsDiffer>false</organismsDiffer>
    <experiments>3</experiments>
</comment>
<comment type="interaction">
    <interactant intactId="EBI-4314501">
        <id>P40199</id>
    </interactant>
    <interactant intactId="EBI-2556193">
        <id>Q63ZY3</id>
        <label>KANK2</label>
    </interactant>
    <organismsDiffer>false</organismsDiffer>
    <experiments>3</experiments>
</comment>
<comment type="interaction">
    <interactant intactId="EBI-4314501">
        <id>P40199</id>
    </interactant>
    <interactant intactId="EBI-11599933">
        <id>Q4VC12</id>
        <label>MSS51</label>
    </interactant>
    <organismsDiffer>false</organismsDiffer>
    <experiments>5</experiments>
</comment>
<comment type="interaction">
    <interactant intactId="EBI-4314501">
        <id>P40199</id>
    </interactant>
    <interactant intactId="EBI-744402">
        <id>Q9NP98</id>
        <label>MYOZ1</label>
    </interactant>
    <organismsDiffer>false</organismsDiffer>
    <experiments>3</experiments>
</comment>
<comment type="interaction">
    <interactant intactId="EBI-4314501">
        <id>P40199</id>
    </interactant>
    <interactant intactId="EBI-748265">
        <id>P78337</id>
        <label>PITX1</label>
    </interactant>
    <organismsDiffer>false</organismsDiffer>
    <experiments>3</experiments>
</comment>
<comment type="interaction">
    <interactant intactId="EBI-4314501">
        <id>P40199</id>
    </interactant>
    <interactant intactId="EBI-11956563">
        <id>Q96HA1-2</id>
        <label>POM121</label>
    </interactant>
    <organismsDiffer>false</organismsDiffer>
    <experiments>3</experiments>
</comment>
<comment type="interaction">
    <interactant intactId="EBI-4314501">
        <id>P40199</id>
    </interactant>
    <interactant intactId="EBI-2798044">
        <id>Q2TAL8</id>
        <label>QRICH1</label>
    </interactant>
    <organismsDiffer>false</organismsDiffer>
    <experiments>3</experiments>
</comment>
<comment type="interaction">
    <interactant intactId="EBI-4314501">
        <id>P40199</id>
    </interactant>
    <interactant intactId="EBI-372094">
        <id>Q9BQY4</id>
        <label>RHOXF2</label>
    </interactant>
    <organismsDiffer>false</organismsDiffer>
    <experiments>3</experiments>
</comment>
<comment type="interaction">
    <interactant intactId="EBI-4314501">
        <id>P40199</id>
    </interactant>
    <interactant intactId="EBI-79084">
        <id>Q92529</id>
        <label>SHC3</label>
    </interactant>
    <organismsDiffer>false</organismsDiffer>
    <experiments>3</experiments>
</comment>
<comment type="interaction">
    <interactant intactId="EBI-4314501">
        <id>P40199</id>
    </interactant>
    <interactant intactId="EBI-358489">
        <id>Q96GM5</id>
        <label>SMARCD1</label>
    </interactant>
    <organismsDiffer>false</organismsDiffer>
    <experiments>3</experiments>
</comment>
<comment type="interaction">
    <interactant intactId="EBI-4314501">
        <id>P40199</id>
    </interactant>
    <interactant intactId="EBI-3939165">
        <id>O43711</id>
        <label>TLX3</label>
    </interactant>
    <organismsDiffer>false</organismsDiffer>
    <experiments>3</experiments>
</comment>
<comment type="interaction">
    <interactant intactId="EBI-4314501">
        <id>P40199</id>
    </interactant>
    <interactant intactId="EBI-20753895">
        <id>P22105-1</id>
        <label>TNXB</label>
    </interactant>
    <organismsDiffer>false</organismsDiffer>
    <experiments>3</experiments>
</comment>
<comment type="interaction">
    <interactant intactId="EBI-4314501">
        <id>P40199</id>
    </interactant>
    <interactant intactId="EBI-947187">
        <id>Q9UHD9</id>
        <label>UBQLN2</label>
    </interactant>
    <organismsDiffer>false</organismsDiffer>
    <experiments>5</experiments>
</comment>
<comment type="interaction">
    <interactant intactId="EBI-4314501">
        <id>P40199</id>
    </interactant>
    <interactant intactId="EBI-10191303">
        <id>O95231</id>
        <label>VENTX</label>
    </interactant>
    <organismsDiffer>false</organismsDiffer>
    <experiments>3</experiments>
</comment>
<comment type="interaction">
    <interactant intactId="EBI-4314501">
        <id>P40199</id>
    </interactant>
    <interactant intactId="EBI-11980193">
        <id>Q14119</id>
        <label>VEZF1</label>
    </interactant>
    <organismsDiffer>false</organismsDiffer>
    <experiments>3</experiments>
</comment>
<comment type="interaction">
    <interactant intactId="EBI-4314501">
        <id>P40199</id>
    </interactant>
    <interactant intactId="EBI-12040603">
        <id>Q9NZC7-5</id>
        <label>WWOX</label>
    </interactant>
    <organismsDiffer>false</organismsDiffer>
    <experiments>3</experiments>
</comment>
<comment type="interaction">
    <interactant intactId="EBI-4314501">
        <id>P40199</id>
    </interactant>
    <interactant intactId="EBI-746595">
        <id>Q96E35</id>
        <label>ZMYND19</label>
    </interactant>
    <organismsDiffer>false</organismsDiffer>
    <experiments>3</experiments>
</comment>
<comment type="interaction">
    <interactant intactId="EBI-4314501">
        <id>P40199</id>
    </interactant>
    <interactant intactId="EBI-7254550">
        <id>P36508</id>
        <label>ZNF76</label>
    </interactant>
    <organismsDiffer>false</organismsDiffer>
    <experiments>3</experiments>
</comment>
<comment type="subcellular location">
    <subcellularLocation>
        <location>Cell membrane</location>
        <topology evidence="15">Lipid-anchor</topology>
        <topology evidence="15">GPI-anchor</topology>
    </subcellularLocation>
    <subcellularLocation>
        <location evidence="5">Apical cell membrane</location>
    </subcellularLocation>
    <subcellularLocation>
        <location evidence="8 11 15 21 24">Cell surface</location>
    </subcellularLocation>
    <text evidence="5">Localized to the apical glycocalyx surface.</text>
</comment>
<comment type="tissue specificity">
    <text evidence="5 8 11">Expressed in neutrophils (PubMed:1378450). Expressed in columnar epithelial and goblet cells of the colon (PubMed:10436421). Expressed in numerous tumor cell lines (at protein level) (PubMed:16204051).</text>
</comment>
<comment type="domain">
    <text evidence="7 14 21">The extracellular N-terminus Ig-like V-type domain is necessary for homophilic and heterophilic intercellular adhesion.</text>
</comment>
<comment type="PTM">
    <text evidence="16">Glycosylated.</text>
</comment>
<comment type="similarity">
    <text evidence="23">Belongs to the immunoglobulin superfamily. CEA family.</text>
</comment>
<comment type="caution">
    <text evidence="9 20">Described to function in anoikis resistance and to be up-regulated in anoikis-resistant pancreatic adenocarcinoma cells in an article that was finally retracted.</text>
</comment>
<sequence>MGPPSAPPCRLHVPWKEVLLTASLLTFWNPPTTAKLTIESTPFNVAEGKEVLLLAHNLPQNRIGYSWYKGERVDGNSLIVGYVIGTQQATPGPAYSGRETIYPNASLLIQNVTQNDTGFYTLQVIKSDLVNEEATGQFHVYPELPKPSISSNNSNPVEDKDAVAFTCEPEVQNTTYLWWVNGQSLPVSPRLQLSNGNMTLTLLSVKRNDAGSYECEIQNPASANRSDPVTLNVLYGPDVPTISPSKANYRPGENLNLSCHAASNPPAQYSWFINGTFQQSTQELFIPNITVNNSGSYMCQAHNSATGLNRTTVTMITVSGSAPVLSAVATVGITIGVLARVALI</sequence>
<keyword id="KW-0002">3D-structure</keyword>
<keyword id="KW-0053">Apoptosis</keyword>
<keyword id="KW-0130">Cell adhesion</keyword>
<keyword id="KW-1003">Cell membrane</keyword>
<keyword id="KW-0903">Direct protein sequencing</keyword>
<keyword id="KW-1015">Disulfide bond</keyword>
<keyword id="KW-0325">Glycoprotein</keyword>
<keyword id="KW-0336">GPI-anchor</keyword>
<keyword id="KW-0393">Immunoglobulin domain</keyword>
<keyword id="KW-0449">Lipoprotein</keyword>
<keyword id="KW-0472">Membrane</keyword>
<keyword id="KW-0553">Oncogene</keyword>
<keyword id="KW-1267">Proteomics identification</keyword>
<keyword id="KW-1185">Reference proteome</keyword>
<keyword id="KW-0677">Repeat</keyword>
<keyword id="KW-0732">Signal</keyword>
<feature type="signal peptide" evidence="10">
    <location>
        <begin position="1"/>
        <end position="34"/>
    </location>
</feature>
<feature type="chain" id="PRO_0000014568" description="Cell adhesion molecule CEACAM6">
    <location>
        <begin position="35"/>
        <end position="320"/>
    </location>
</feature>
<feature type="propeptide" id="PRO_0000014569" description="Removed in mature form" evidence="1">
    <location>
        <begin position="321"/>
        <end position="344"/>
    </location>
</feature>
<feature type="domain" description="Ig-like V-type" evidence="2">
    <location>
        <begin position="35"/>
        <end position="142"/>
    </location>
</feature>
<feature type="domain" description="Ig-like C2-type 1" evidence="3">
    <location>
        <begin position="145"/>
        <end position="232"/>
    </location>
</feature>
<feature type="domain" description="Ig-like C2-type 2" evidence="3">
    <location>
        <begin position="240"/>
        <end position="314"/>
    </location>
</feature>
<feature type="lipid moiety-binding region" description="GPI-anchor amidated glycine" evidence="2">
    <location>
        <position position="320"/>
    </location>
</feature>
<feature type="glycosylation site" description="N-linked (GlcNAc...) asparagine" evidence="4">
    <location>
        <position position="104"/>
    </location>
</feature>
<feature type="glycosylation site" description="N-linked (GlcNAc...) asparagine" evidence="4">
    <location>
        <position position="111"/>
    </location>
</feature>
<feature type="glycosylation site" description="N-linked (GlcNAc...) asparagine" evidence="4">
    <location>
        <position position="115"/>
    </location>
</feature>
<feature type="glycosylation site" description="N-linked (GlcNAc...) asparagine" evidence="4">
    <location>
        <position position="152"/>
    </location>
</feature>
<feature type="glycosylation site" description="N-linked (GlcNAc...) asparagine" evidence="4">
    <location>
        <position position="173"/>
    </location>
</feature>
<feature type="glycosylation site" description="N-linked (GlcNAc...) asparagine" evidence="4 12">
    <location>
        <position position="197"/>
    </location>
</feature>
<feature type="glycosylation site" description="N-linked (GlcNAc...) asparagine" evidence="4 13">
    <location>
        <position position="224"/>
    </location>
</feature>
<feature type="glycosylation site" description="N-linked (GlcNAc...) asparagine" evidence="4">
    <location>
        <position position="256"/>
    </location>
</feature>
<feature type="glycosylation site" description="N-linked (GlcNAc...) asparagine" evidence="4">
    <location>
        <position position="274"/>
    </location>
</feature>
<feature type="glycosylation site" description="N-linked (GlcNAc...) asparagine" evidence="4">
    <location>
        <position position="288"/>
    </location>
</feature>
<feature type="glycosylation site" description="N-linked (GlcNAc...) asparagine" evidence="4">
    <location>
        <position position="292"/>
    </location>
</feature>
<feature type="glycosylation site" description="N-linked (GlcNAc...) asparagine" evidence="4">
    <location>
        <position position="309"/>
    </location>
</feature>
<feature type="disulfide bond" evidence="3">
    <location>
        <begin position="167"/>
        <end position="215"/>
    </location>
</feature>
<feature type="disulfide bond" evidence="3">
    <location>
        <begin position="259"/>
        <end position="299"/>
    </location>
</feature>
<feature type="sequence variant" id="VAR_034680" description="In dbSNP:rs11548735." evidence="18 19">
    <original>V</original>
    <variation>G</variation>
    <location>
        <position position="239"/>
    </location>
</feature>
<feature type="mutagenesis site" description="Loss of homodimerization and heterodimerization with CEACAM8." evidence="16">
    <original>I</original>
    <variation>A</variation>
    <location>
        <position position="38"/>
    </location>
</feature>
<feature type="mutagenesis site" description="No effect on homodimerization. Reduces heterodimerization with CEACAM8." evidence="16">
    <original>L</original>
    <variation>A</variation>
    <location>
        <position position="53"/>
    </location>
</feature>
<feature type="mutagenesis site" description="No effect on homophilic and heterophilic cell adhesion." evidence="7">
    <original>A</original>
    <variation>V</variation>
    <location>
        <position position="55"/>
    </location>
</feature>
<feature type="mutagenesis site" description="Inhibits homophilic and heterophilic cell adhesion." evidence="7">
    <original>N</original>
    <variation>H</variation>
    <location>
        <position position="61"/>
    </location>
</feature>
<feature type="mutagenesis site" description="No effect on homophilic cell adhesion. Reduces heterophilic cell adhesion." evidence="7">
    <original>R</original>
    <variation>L</variation>
    <location>
        <position position="62"/>
    </location>
</feature>
<feature type="mutagenesis site" description="No effect on homophilic cell adhesion. Inhibits heterophilic cell adhesion." evidence="7">
    <original>I</original>
    <variation>F</variation>
    <location>
        <position position="63"/>
    </location>
</feature>
<feature type="mutagenesis site" description="Inhibits homophilic cell adhesion. Reduces heterophilic cell adhesion." evidence="7">
    <original>S</original>
    <variation>N</variation>
    <location>
        <position position="66"/>
    </location>
</feature>
<feature type="mutagenesis site" description="Inhibits homophilic cell adhesion. No effect on heterophilic cell adhesion." evidence="7">
    <original>L</original>
    <variation>Q</variation>
    <location>
        <position position="78"/>
    </location>
</feature>
<feature type="mutagenesis site" description="No effect on homodimerization. Reduces heterodimerization with CEACAM8." evidence="16">
    <original>Q</original>
    <variation>A</variation>
    <location>
        <position position="123"/>
    </location>
</feature>
<feature type="mutagenesis site" description="Reduces homodimerization. Loss of heterodimerization with CEACAM8." evidence="16">
    <original>L</original>
    <variation>A</variation>
    <location>
        <position position="129"/>
    </location>
</feature>
<feature type="sequence conflict" description="In Ref. 1; AAA59915." evidence="23" ref="1">
    <original>F</original>
    <variation>L</variation>
    <location>
        <position position="138"/>
    </location>
</feature>
<feature type="strand" evidence="30">
    <location>
        <begin position="37"/>
        <end position="45"/>
    </location>
</feature>
<feature type="strand" evidence="30">
    <location>
        <begin position="51"/>
        <end position="57"/>
    </location>
</feature>
<feature type="strand" evidence="30">
    <location>
        <begin position="62"/>
        <end position="72"/>
    </location>
</feature>
<feature type="helix" evidence="30">
    <location>
        <begin position="75"/>
        <end position="77"/>
    </location>
</feature>
<feature type="strand" evidence="30">
    <location>
        <begin position="78"/>
        <end position="83"/>
    </location>
</feature>
<feature type="turn" evidence="30">
    <location>
        <begin position="84"/>
        <end position="87"/>
    </location>
</feature>
<feature type="strand" evidence="30">
    <location>
        <begin position="88"/>
        <end position="91"/>
    </location>
</feature>
<feature type="strand" evidence="30">
    <location>
        <begin position="99"/>
        <end position="101"/>
    </location>
</feature>
<feature type="strand" evidence="30">
    <location>
        <begin position="107"/>
        <end position="109"/>
    </location>
</feature>
<feature type="helix" evidence="30">
    <location>
        <begin position="114"/>
        <end position="116"/>
    </location>
</feature>
<feature type="strand" evidence="30">
    <location>
        <begin position="118"/>
        <end position="126"/>
    </location>
</feature>
<feature type="strand" evidence="30">
    <location>
        <begin position="132"/>
        <end position="140"/>
    </location>
</feature>
<name>CEAM6_HUMAN</name>
<gene>
    <name evidence="25" type="primary">CEACAM6</name>
    <name evidence="22" type="synonym">NCA</name>
</gene>
<organism>
    <name type="scientific">Homo sapiens</name>
    <name type="common">Human</name>
    <dbReference type="NCBI Taxonomy" id="9606"/>
    <lineage>
        <taxon>Eukaryota</taxon>
        <taxon>Metazoa</taxon>
        <taxon>Chordata</taxon>
        <taxon>Craniata</taxon>
        <taxon>Vertebrata</taxon>
        <taxon>Euteleostomi</taxon>
        <taxon>Mammalia</taxon>
        <taxon>Eutheria</taxon>
        <taxon>Euarchontoglires</taxon>
        <taxon>Primates</taxon>
        <taxon>Haplorrhini</taxon>
        <taxon>Catarrhini</taxon>
        <taxon>Hominidae</taxon>
        <taxon>Homo</taxon>
    </lineage>
</organism>
<dbReference type="EMBL" id="M29541">
    <property type="protein sequence ID" value="AAA59915.1"/>
    <property type="molecule type" value="mRNA"/>
</dbReference>
<dbReference type="EMBL" id="M18728">
    <property type="protein sequence ID" value="AAA59907.1"/>
    <property type="molecule type" value="mRNA"/>
</dbReference>
<dbReference type="EMBL" id="M18216">
    <property type="protein sequence ID" value="AAA51739.1"/>
    <property type="molecule type" value="mRNA"/>
</dbReference>
<dbReference type="EMBL" id="BT009774">
    <property type="protein sequence ID" value="AAP88776.1"/>
    <property type="molecule type" value="mRNA"/>
</dbReference>
<dbReference type="EMBL" id="AK312542">
    <property type="protein sequence ID" value="BAG35441.1"/>
    <property type="molecule type" value="mRNA"/>
</dbReference>
<dbReference type="EMBL" id="AC011513">
    <property type="status" value="NOT_ANNOTATED_CDS"/>
    <property type="molecule type" value="Genomic_DNA"/>
</dbReference>
<dbReference type="EMBL" id="CH471126">
    <property type="protein sequence ID" value="EAW57061.1"/>
    <property type="molecule type" value="Genomic_DNA"/>
</dbReference>
<dbReference type="EMBL" id="BC005008">
    <property type="protein sequence ID" value="AAH05008.1"/>
    <property type="molecule type" value="mRNA"/>
</dbReference>
<dbReference type="CCDS" id="CCDS12585.1"/>
<dbReference type="RefSeq" id="NP_002474.4">
    <property type="nucleotide sequence ID" value="NM_002483.6"/>
</dbReference>
<dbReference type="PDB" id="4WHC">
    <property type="method" value="X-ray"/>
    <property type="resolution" value="2.71 A"/>
    <property type="chains" value="A/B=34-141"/>
</dbReference>
<dbReference type="PDB" id="4WTZ">
    <property type="method" value="X-ray"/>
    <property type="resolution" value="2.52 A"/>
    <property type="chains" value="A/B/C/D/E/F=34-141"/>
</dbReference>
<dbReference type="PDB" id="4Y8A">
    <property type="method" value="X-ray"/>
    <property type="resolution" value="1.83 A"/>
    <property type="chains" value="A/B=34-141"/>
</dbReference>
<dbReference type="PDB" id="4YIQ">
    <property type="method" value="X-ray"/>
    <property type="resolution" value="1.85 A"/>
    <property type="chains" value="B/D=34-141"/>
</dbReference>
<dbReference type="PDBsum" id="4WHC"/>
<dbReference type="PDBsum" id="4WTZ"/>
<dbReference type="PDBsum" id="4Y8A"/>
<dbReference type="PDBsum" id="4YIQ"/>
<dbReference type="SMR" id="P40199"/>
<dbReference type="BioGRID" id="110760">
    <property type="interactions" value="260"/>
</dbReference>
<dbReference type="FunCoup" id="P40199">
    <property type="interactions" value="11"/>
</dbReference>
<dbReference type="IntAct" id="P40199">
    <property type="interactions" value="31"/>
</dbReference>
<dbReference type="STRING" id="9606.ENSP00000199764"/>
<dbReference type="GlyCosmos" id="P40199">
    <property type="glycosylation" value="12 sites, No reported glycans"/>
</dbReference>
<dbReference type="GlyGen" id="P40199">
    <property type="glycosylation" value="17 sites, 7 N-linked glycans (3 sites), 1 N-linked;o-linked glycan (1 site), 1 O-linked glycan (2 sites)"/>
</dbReference>
<dbReference type="iPTMnet" id="P40199"/>
<dbReference type="PhosphoSitePlus" id="P40199"/>
<dbReference type="BioMuta" id="CEACAM6"/>
<dbReference type="DMDM" id="296439410"/>
<dbReference type="jPOST" id="P40199"/>
<dbReference type="MassIVE" id="P40199"/>
<dbReference type="PaxDb" id="9606-ENSP00000199764"/>
<dbReference type="PeptideAtlas" id="P40199"/>
<dbReference type="ProteomicsDB" id="55345"/>
<dbReference type="ABCD" id="P40199">
    <property type="antibodies" value="5 sequenced antibodies"/>
</dbReference>
<dbReference type="Antibodypedia" id="3642">
    <property type="antibodies" value="616 antibodies from 36 providers"/>
</dbReference>
<dbReference type="DNASU" id="4680"/>
<dbReference type="Ensembl" id="ENST00000199764.7">
    <property type="protein sequence ID" value="ENSP00000199764.6"/>
    <property type="gene ID" value="ENSG00000086548.9"/>
</dbReference>
<dbReference type="GeneID" id="4680"/>
<dbReference type="KEGG" id="hsa:4680"/>
<dbReference type="MANE-Select" id="ENST00000199764.7">
    <property type="protein sequence ID" value="ENSP00000199764.6"/>
    <property type="RefSeq nucleotide sequence ID" value="NM_002483.7"/>
    <property type="RefSeq protein sequence ID" value="NP_002474.4"/>
</dbReference>
<dbReference type="UCSC" id="uc032hyc.2">
    <property type="organism name" value="human"/>
</dbReference>
<dbReference type="AGR" id="HGNC:1818"/>
<dbReference type="CTD" id="4680"/>
<dbReference type="DisGeNET" id="4680"/>
<dbReference type="GeneCards" id="CEACAM6"/>
<dbReference type="HGNC" id="HGNC:1818">
    <property type="gene designation" value="CEACAM6"/>
</dbReference>
<dbReference type="HPA" id="ENSG00000086548">
    <property type="expression patterns" value="Tissue enhanced (bone marrow, esophagus, intestine, lung, salivary gland)"/>
</dbReference>
<dbReference type="MalaCards" id="CEACAM6"/>
<dbReference type="MIM" id="163980">
    <property type="type" value="gene"/>
</dbReference>
<dbReference type="neXtProt" id="NX_P40199"/>
<dbReference type="OpenTargets" id="ENSG00000086548"/>
<dbReference type="Orphanet" id="586">
    <property type="disease" value="Cystic fibrosis"/>
</dbReference>
<dbReference type="PharmGKB" id="PA26362"/>
<dbReference type="VEuPathDB" id="HostDB:ENSG00000086548"/>
<dbReference type="eggNOG" id="ENOG502RXPD">
    <property type="taxonomic scope" value="Eukaryota"/>
</dbReference>
<dbReference type="GeneTree" id="ENSGT01100000263479"/>
<dbReference type="HOGENOM" id="CLU_024555_2_0_1"/>
<dbReference type="InParanoid" id="P40199"/>
<dbReference type="OMA" id="FTCEPEV"/>
<dbReference type="OrthoDB" id="6159398at2759"/>
<dbReference type="PAN-GO" id="P40199">
    <property type="GO annotations" value="2 GO annotations based on evolutionary models"/>
</dbReference>
<dbReference type="PhylomeDB" id="P40199"/>
<dbReference type="TreeFam" id="TF336859"/>
<dbReference type="PathwayCommons" id="P40199"/>
<dbReference type="Reactome" id="R-HSA-1566977">
    <property type="pathway name" value="Fibronectin matrix formation"/>
</dbReference>
<dbReference type="Reactome" id="R-HSA-202733">
    <property type="pathway name" value="Cell surface interactions at the vascular wall"/>
</dbReference>
<dbReference type="Reactome" id="R-HSA-6798695">
    <property type="pathway name" value="Neutrophil degranulation"/>
</dbReference>
<dbReference type="SignaLink" id="P40199"/>
<dbReference type="BioGRID-ORCS" id="4680">
    <property type="hits" value="70 hits in 1136 CRISPR screens"/>
</dbReference>
<dbReference type="ChiTaRS" id="CEACAM6">
    <property type="organism name" value="human"/>
</dbReference>
<dbReference type="EvolutionaryTrace" id="P40199"/>
<dbReference type="GeneWiki" id="CEACAM6"/>
<dbReference type="GenomeRNAi" id="4680"/>
<dbReference type="Pharos" id="P40199">
    <property type="development level" value="Tbio"/>
</dbReference>
<dbReference type="PRO" id="PR:P40199"/>
<dbReference type="Proteomes" id="UP000005640">
    <property type="component" value="Chromosome 19"/>
</dbReference>
<dbReference type="RNAct" id="P40199">
    <property type="molecule type" value="protein"/>
</dbReference>
<dbReference type="Bgee" id="ENSG00000086548">
    <property type="expression patterns" value="Expressed in pancreatic ductal cell and 152 other cell types or tissues"/>
</dbReference>
<dbReference type="ExpressionAtlas" id="P40199">
    <property type="expression patterns" value="baseline and differential"/>
</dbReference>
<dbReference type="GO" id="GO:0016324">
    <property type="term" value="C:apical plasma membrane"/>
    <property type="evidence" value="ECO:0000314"/>
    <property type="project" value="UniProtKB"/>
</dbReference>
<dbReference type="GO" id="GO:0035577">
    <property type="term" value="C:azurophil granule membrane"/>
    <property type="evidence" value="ECO:0000304"/>
    <property type="project" value="Reactome"/>
</dbReference>
<dbReference type="GO" id="GO:0009986">
    <property type="term" value="C:cell surface"/>
    <property type="evidence" value="ECO:0000314"/>
    <property type="project" value="UniProtKB"/>
</dbReference>
<dbReference type="GO" id="GO:0005615">
    <property type="term" value="C:extracellular space"/>
    <property type="evidence" value="ECO:0000314"/>
    <property type="project" value="UniProtKB"/>
</dbReference>
<dbReference type="GO" id="GO:0016020">
    <property type="term" value="C:membrane"/>
    <property type="evidence" value="ECO:0000314"/>
    <property type="project" value="UniProtKB"/>
</dbReference>
<dbReference type="GO" id="GO:0005886">
    <property type="term" value="C:plasma membrane"/>
    <property type="evidence" value="ECO:0000304"/>
    <property type="project" value="Reactome"/>
</dbReference>
<dbReference type="GO" id="GO:0098552">
    <property type="term" value="C:side of membrane"/>
    <property type="evidence" value="ECO:0007669"/>
    <property type="project" value="UniProtKB-KW"/>
</dbReference>
<dbReference type="GO" id="GO:0042802">
    <property type="term" value="F:identical protein binding"/>
    <property type="evidence" value="ECO:0000314"/>
    <property type="project" value="UniProtKB"/>
</dbReference>
<dbReference type="GO" id="GO:0046982">
    <property type="term" value="F:protein heterodimerization activity"/>
    <property type="evidence" value="ECO:0000314"/>
    <property type="project" value="UniProtKB"/>
</dbReference>
<dbReference type="GO" id="GO:0006915">
    <property type="term" value="P:apoptotic process"/>
    <property type="evidence" value="ECO:0007669"/>
    <property type="project" value="UniProtKB-KW"/>
</dbReference>
<dbReference type="GO" id="GO:0007157">
    <property type="term" value="P:heterophilic cell-cell adhesion via plasma membrane cell adhesion molecules"/>
    <property type="evidence" value="ECO:0000315"/>
    <property type="project" value="UniProtKB"/>
</dbReference>
<dbReference type="GO" id="GO:0007156">
    <property type="term" value="P:homophilic cell adhesion via plasma membrane adhesion molecules"/>
    <property type="evidence" value="ECO:0000315"/>
    <property type="project" value="UniProtKB"/>
</dbReference>
<dbReference type="GO" id="GO:2000811">
    <property type="term" value="P:negative regulation of anoikis"/>
    <property type="evidence" value="ECO:0000315"/>
    <property type="project" value="UniProtKB"/>
</dbReference>
<dbReference type="GO" id="GO:0030335">
    <property type="term" value="P:positive regulation of cell migration"/>
    <property type="evidence" value="ECO:0000315"/>
    <property type="project" value="UniProtKB"/>
</dbReference>
<dbReference type="GO" id="GO:0008284">
    <property type="term" value="P:positive regulation of cell population proliferation"/>
    <property type="evidence" value="ECO:0000315"/>
    <property type="project" value="BHF-UCL"/>
</dbReference>
<dbReference type="GO" id="GO:1904906">
    <property type="term" value="P:positive regulation of endothelial cell-matrix adhesion via fibronectin"/>
    <property type="evidence" value="ECO:0000315"/>
    <property type="project" value="UniProtKB"/>
</dbReference>
<dbReference type="GO" id="GO:0034116">
    <property type="term" value="P:positive regulation of heterotypic cell-cell adhesion"/>
    <property type="evidence" value="ECO:0000315"/>
    <property type="project" value="UniProtKB"/>
</dbReference>
<dbReference type="CDD" id="cd20948">
    <property type="entry name" value="IgC2_CEACAM5-like"/>
    <property type="match status" value="1"/>
</dbReference>
<dbReference type="CDD" id="cd05740">
    <property type="entry name" value="IgI_hCEACAM_2_4_6_like"/>
    <property type="match status" value="1"/>
</dbReference>
<dbReference type="CDD" id="cd05774">
    <property type="entry name" value="IgV_CEACAM_D1"/>
    <property type="match status" value="1"/>
</dbReference>
<dbReference type="FunFam" id="2.60.40.10:FF:000340">
    <property type="entry name" value="Carcinoembryonic antigen-related cell adhesion molecule 1"/>
    <property type="match status" value="1"/>
</dbReference>
<dbReference type="FunFam" id="2.60.40.10:FF:000517">
    <property type="entry name" value="Carcinoembryonic antigen-related cell adhesion molecule 1"/>
    <property type="match status" value="1"/>
</dbReference>
<dbReference type="FunFam" id="2.60.40.10:FF:000244">
    <property type="entry name" value="carcinoembryonic antigen-related cell adhesion molecule 16"/>
    <property type="match status" value="1"/>
</dbReference>
<dbReference type="Gene3D" id="2.60.40.10">
    <property type="entry name" value="Immunoglobulins"/>
    <property type="match status" value="3"/>
</dbReference>
<dbReference type="InterPro" id="IPR050831">
    <property type="entry name" value="CEA_cell_adhesion"/>
</dbReference>
<dbReference type="InterPro" id="IPR007110">
    <property type="entry name" value="Ig-like_dom"/>
</dbReference>
<dbReference type="InterPro" id="IPR036179">
    <property type="entry name" value="Ig-like_dom_sf"/>
</dbReference>
<dbReference type="InterPro" id="IPR013783">
    <property type="entry name" value="Ig-like_fold"/>
</dbReference>
<dbReference type="InterPro" id="IPR003599">
    <property type="entry name" value="Ig_sub"/>
</dbReference>
<dbReference type="InterPro" id="IPR003598">
    <property type="entry name" value="Ig_sub2"/>
</dbReference>
<dbReference type="InterPro" id="IPR013106">
    <property type="entry name" value="Ig_V-set"/>
</dbReference>
<dbReference type="PANTHER" id="PTHR44427:SF1">
    <property type="entry name" value="CARCINOEMBRYONIC ANTIGEN-RELATED CELL ADHESION MOLECULE 1"/>
    <property type="match status" value="1"/>
</dbReference>
<dbReference type="PANTHER" id="PTHR44427">
    <property type="entry name" value="CARCINOEMBRYONIC ANTIGEN-RELATED CELL ADHESION MOLECULE 19"/>
    <property type="match status" value="1"/>
</dbReference>
<dbReference type="Pfam" id="PF13895">
    <property type="entry name" value="Ig_2"/>
    <property type="match status" value="1"/>
</dbReference>
<dbReference type="Pfam" id="PF13927">
    <property type="entry name" value="Ig_3"/>
    <property type="match status" value="1"/>
</dbReference>
<dbReference type="Pfam" id="PF07686">
    <property type="entry name" value="V-set"/>
    <property type="match status" value="1"/>
</dbReference>
<dbReference type="SMART" id="SM00409">
    <property type="entry name" value="IG"/>
    <property type="match status" value="3"/>
</dbReference>
<dbReference type="SMART" id="SM00408">
    <property type="entry name" value="IGc2"/>
    <property type="match status" value="2"/>
</dbReference>
<dbReference type="SUPFAM" id="SSF48726">
    <property type="entry name" value="Immunoglobulin"/>
    <property type="match status" value="3"/>
</dbReference>
<dbReference type="PROSITE" id="PS50835">
    <property type="entry name" value="IG_LIKE"/>
    <property type="match status" value="2"/>
</dbReference>